<sequence>MRFKGLDLNLLVALDRLMTERKLTAAARAINLSQPAMSAAISRWRDYFRDDLFIIQRRELNPTPAAEPLAPVVREALLHIQLSVIAWDPINPAEFDRRFRIILSDFMALVFFEKIIVRLAREAPGVSFKLLPLDDDPEELLRRGDVDFLILPDLFMSGAHRKARLFEERLVCVGCSTNEQLQGKLFLEQYMSMGHVAAKFGRGLKPSVEQWLLLQQGLKRRIELVVPGFNLIPPLLSGTNRIATIPLRLVKHYEQTIPLRIIEHPLPLLSFTEAVQWPALHNSDPGNIWMREIMIQEASRHWNPRPKVVRLKRPRSFHSRSS</sequence>
<dbReference type="EMBL" id="J03671">
    <property type="protein sequence ID" value="AAA26299.1"/>
    <property type="molecule type" value="Genomic_DNA"/>
</dbReference>
<dbReference type="SMR" id="P16556"/>
<dbReference type="GO" id="GO:0003677">
    <property type="term" value="F:DNA binding"/>
    <property type="evidence" value="ECO:0007669"/>
    <property type="project" value="UniProtKB-KW"/>
</dbReference>
<dbReference type="GO" id="GO:0003700">
    <property type="term" value="F:DNA-binding transcription factor activity"/>
    <property type="evidence" value="ECO:0007669"/>
    <property type="project" value="InterPro"/>
</dbReference>
<dbReference type="CDD" id="cd08462">
    <property type="entry name" value="PBP2_NodD"/>
    <property type="match status" value="1"/>
</dbReference>
<dbReference type="Gene3D" id="3.40.190.10">
    <property type="entry name" value="Periplasmic binding protein-like II"/>
    <property type="match status" value="2"/>
</dbReference>
<dbReference type="Gene3D" id="1.10.10.10">
    <property type="entry name" value="Winged helix-like DNA-binding domain superfamily/Winged helix DNA-binding domain"/>
    <property type="match status" value="1"/>
</dbReference>
<dbReference type="InterPro" id="IPR050389">
    <property type="entry name" value="LysR-type_TF"/>
</dbReference>
<dbReference type="InterPro" id="IPR005119">
    <property type="entry name" value="LysR_subst-bd"/>
</dbReference>
<dbReference type="InterPro" id="IPR037416">
    <property type="entry name" value="NodD_PBP2"/>
</dbReference>
<dbReference type="InterPro" id="IPR000847">
    <property type="entry name" value="Tscrpt_reg_HTH_LysR"/>
</dbReference>
<dbReference type="InterPro" id="IPR036388">
    <property type="entry name" value="WH-like_DNA-bd_sf"/>
</dbReference>
<dbReference type="InterPro" id="IPR036390">
    <property type="entry name" value="WH_DNA-bd_sf"/>
</dbReference>
<dbReference type="PANTHER" id="PTHR30118:SF6">
    <property type="entry name" value="HTH-TYPE TRANSCRIPTIONAL REGULATOR LEUO"/>
    <property type="match status" value="1"/>
</dbReference>
<dbReference type="PANTHER" id="PTHR30118">
    <property type="entry name" value="HTH-TYPE TRANSCRIPTIONAL REGULATOR LEUO-RELATED"/>
    <property type="match status" value="1"/>
</dbReference>
<dbReference type="Pfam" id="PF00126">
    <property type="entry name" value="HTH_1"/>
    <property type="match status" value="1"/>
</dbReference>
<dbReference type="Pfam" id="PF03466">
    <property type="entry name" value="LysR_substrate"/>
    <property type="match status" value="1"/>
</dbReference>
<dbReference type="SUPFAM" id="SSF53850">
    <property type="entry name" value="Periplasmic binding protein-like II"/>
    <property type="match status" value="1"/>
</dbReference>
<dbReference type="SUPFAM" id="SSF46785">
    <property type="entry name" value="Winged helix' DNA-binding domain"/>
    <property type="match status" value="1"/>
</dbReference>
<dbReference type="PROSITE" id="PS50931">
    <property type="entry name" value="HTH_LYSR"/>
    <property type="match status" value="1"/>
</dbReference>
<geneLocation type="plasmid">
    <name>sym pRle1001a</name>
</geneLocation>
<reference key="1">
    <citation type="journal article" date="1988" name="Mol. Plant Microbe Interact.">
        <title>Identification and characterization of the nodD gene in Rhizobium leguminosarum strain 1001.</title>
        <authorList>
            <person name="Squartini A."/>
            <person name="van Veen R.J.M."/>
            <person name="Regensberg-Tuink T."/>
            <person name="Hooyraas P.J.J."/>
            <person name="Nuti M.P."/>
        </authorList>
    </citation>
    <scope>NUCLEOTIDE SEQUENCE [GENOMIC DNA]</scope>
    <source>
        <strain>1001</strain>
    </source>
</reference>
<proteinExistence type="inferred from homology"/>
<protein>
    <recommendedName>
        <fullName>Nodulation protein D</fullName>
    </recommendedName>
</protein>
<accession>P16556</accession>
<keyword id="KW-0010">Activator</keyword>
<keyword id="KW-0238">DNA-binding</keyword>
<keyword id="KW-0536">Nodulation</keyword>
<keyword id="KW-0614">Plasmid</keyword>
<keyword id="KW-0678">Repressor</keyword>
<keyword id="KW-0804">Transcription</keyword>
<keyword id="KW-0805">Transcription regulation</keyword>
<comment type="function">
    <text>NodD regulates the expression of the nodABCFE genes which encode other nodulation proteins. NodD is also a negative regulator of its own expression. Binds flavonoids as inducers.</text>
</comment>
<comment type="similarity">
    <text evidence="2">Belongs to the LysR transcriptional regulatory family.</text>
</comment>
<organism>
    <name type="scientific">Rhizobium leguminosarum</name>
    <dbReference type="NCBI Taxonomy" id="384"/>
    <lineage>
        <taxon>Bacteria</taxon>
        <taxon>Pseudomonadati</taxon>
        <taxon>Pseudomonadota</taxon>
        <taxon>Alphaproteobacteria</taxon>
        <taxon>Hyphomicrobiales</taxon>
        <taxon>Rhizobiaceae</taxon>
        <taxon>Rhizobium/Agrobacterium group</taxon>
        <taxon>Rhizobium</taxon>
    </lineage>
</organism>
<name>NODD_RHILE</name>
<feature type="chain" id="PRO_0000105715" description="Nodulation protein D">
    <location>
        <begin position="1"/>
        <end position="322"/>
    </location>
</feature>
<feature type="domain" description="HTH lysR-type" evidence="1">
    <location>
        <begin position="6"/>
        <end position="63"/>
    </location>
</feature>
<feature type="DNA-binding region" description="H-T-H motif" evidence="1">
    <location>
        <begin position="23"/>
        <end position="42"/>
    </location>
</feature>
<evidence type="ECO:0000255" key="1">
    <source>
        <dbReference type="PROSITE-ProRule" id="PRU00253"/>
    </source>
</evidence>
<evidence type="ECO:0000305" key="2"/>
<gene>
    <name type="primary">nodD</name>
</gene>